<protein>
    <recommendedName>
        <fullName evidence="1">Adenine deaminase 2</fullName>
        <shortName evidence="1">Adenase 2</shortName>
        <shortName evidence="1">Adenine aminase 2</shortName>
        <ecNumber evidence="1">3.5.4.2</ecNumber>
    </recommendedName>
</protein>
<evidence type="ECO:0000255" key="1">
    <source>
        <dbReference type="HAMAP-Rule" id="MF_01518"/>
    </source>
</evidence>
<keyword id="KW-0378">Hydrolase</keyword>
<keyword id="KW-0464">Manganese</keyword>
<keyword id="KW-1185">Reference proteome</keyword>
<sequence>MTNLTRFSVAPLHTMTRRLADVASGRVAPDLVITGARVLSTYSERILRDRELWITGGRVAAVKPAGAHKALPSGFTIYDAAGGIIAPGLVDPHIHIESSMVTACAYAEAALLNGTTTIFCDSHEIGNVMDTAGVEAMLEDARQAPLSIFLTVPSTVPATSAALETAGGDLTPDKIAGLFDRWPEAVALGEKMDFVPVCMGDERSHAILAAALQRGRPVSGHVYGREFVAAYAASGVTDTHEAIDRDIADDLLDAGVWIFLRGGPPTTPWHSLPQAIRTITELGASHKRTAVCTDDRDADDLMLFGLDWVVREAVKAGMSPEQAWSMGSLHGATRFAMDGEIGGLGGGRRADLVLLDDGLKPQSTWYGGELVVDQGKITSLLDQALSQRYQYPKAAYATVKLPAQMKLTPELPAKACTVNAIKTALPGITLIHEKVAIKPANDWDTLFARHGLCFVAVIERHGKSAGNVAHGLLKDFGLKRGAVASSVGHDSHNIIVAGTNEADMQTAVAAIGAQQGGVCVVADGKVRAMVPLPIAGLLSDKRVTAVAEEVKLLKKEWAEAGCTIPYMGFNLIPLSVIPEIRITDKGLVLVPQMELAPLFE</sequence>
<feature type="chain" id="PRO_0000296718" description="Adenine deaminase 2">
    <location>
        <begin position="1"/>
        <end position="600"/>
    </location>
</feature>
<accession>A4YXM5</accession>
<gene>
    <name evidence="1" type="primary">ade2</name>
    <name type="ordered locus">BRADO4947</name>
</gene>
<comment type="catalytic activity">
    <reaction evidence="1">
        <text>adenine + H2O + H(+) = hypoxanthine + NH4(+)</text>
        <dbReference type="Rhea" id="RHEA:23688"/>
        <dbReference type="ChEBI" id="CHEBI:15377"/>
        <dbReference type="ChEBI" id="CHEBI:15378"/>
        <dbReference type="ChEBI" id="CHEBI:16708"/>
        <dbReference type="ChEBI" id="CHEBI:17368"/>
        <dbReference type="ChEBI" id="CHEBI:28938"/>
        <dbReference type="EC" id="3.5.4.2"/>
    </reaction>
</comment>
<comment type="cofactor">
    <cofactor evidence="1">
        <name>Mn(2+)</name>
        <dbReference type="ChEBI" id="CHEBI:29035"/>
    </cofactor>
</comment>
<comment type="similarity">
    <text evidence="1">Belongs to the metallo-dependent hydrolases superfamily. Adenine deaminase family.</text>
</comment>
<proteinExistence type="inferred from homology"/>
<dbReference type="EC" id="3.5.4.2" evidence="1"/>
<dbReference type="EMBL" id="CU234118">
    <property type="protein sequence ID" value="CAL78651.1"/>
    <property type="molecule type" value="Genomic_DNA"/>
</dbReference>
<dbReference type="RefSeq" id="WP_011927749.1">
    <property type="nucleotide sequence ID" value="NC_009445.1"/>
</dbReference>
<dbReference type="SMR" id="A4YXM5"/>
<dbReference type="STRING" id="114615.BRADO4947"/>
<dbReference type="KEGG" id="bra:BRADO4947"/>
<dbReference type="eggNOG" id="COG1001">
    <property type="taxonomic scope" value="Bacteria"/>
</dbReference>
<dbReference type="HOGENOM" id="CLU_027935_0_0_5"/>
<dbReference type="OrthoDB" id="9775607at2"/>
<dbReference type="Proteomes" id="UP000001994">
    <property type="component" value="Chromosome"/>
</dbReference>
<dbReference type="GO" id="GO:0000034">
    <property type="term" value="F:adenine deaminase activity"/>
    <property type="evidence" value="ECO:0007669"/>
    <property type="project" value="UniProtKB-UniRule"/>
</dbReference>
<dbReference type="GO" id="GO:0006146">
    <property type="term" value="P:adenine catabolic process"/>
    <property type="evidence" value="ECO:0007669"/>
    <property type="project" value="InterPro"/>
</dbReference>
<dbReference type="CDD" id="cd01295">
    <property type="entry name" value="AdeC"/>
    <property type="match status" value="1"/>
</dbReference>
<dbReference type="FunFam" id="3.20.20.140:FF:000061">
    <property type="entry name" value="Adenine deaminase"/>
    <property type="match status" value="1"/>
</dbReference>
<dbReference type="Gene3D" id="3.20.20.140">
    <property type="entry name" value="Metal-dependent hydrolases"/>
    <property type="match status" value="1"/>
</dbReference>
<dbReference type="Gene3D" id="2.30.40.10">
    <property type="entry name" value="Urease, subunit C, domain 1"/>
    <property type="match status" value="1"/>
</dbReference>
<dbReference type="HAMAP" id="MF_01518">
    <property type="entry name" value="Adenine_deamin"/>
    <property type="match status" value="1"/>
</dbReference>
<dbReference type="InterPro" id="IPR006679">
    <property type="entry name" value="Adenine_deam"/>
</dbReference>
<dbReference type="InterPro" id="IPR026912">
    <property type="entry name" value="Adenine_deam_C"/>
</dbReference>
<dbReference type="InterPro" id="IPR006680">
    <property type="entry name" value="Amidohydro-rel"/>
</dbReference>
<dbReference type="InterPro" id="IPR011059">
    <property type="entry name" value="Metal-dep_hydrolase_composite"/>
</dbReference>
<dbReference type="InterPro" id="IPR032466">
    <property type="entry name" value="Metal_Hydrolase"/>
</dbReference>
<dbReference type="PANTHER" id="PTHR11113:SF2">
    <property type="entry name" value="ADENINE DEAMINASE"/>
    <property type="match status" value="1"/>
</dbReference>
<dbReference type="PANTHER" id="PTHR11113">
    <property type="entry name" value="N-ACETYLGLUCOSAMINE-6-PHOSPHATE DEACETYLASE"/>
    <property type="match status" value="1"/>
</dbReference>
<dbReference type="Pfam" id="PF13382">
    <property type="entry name" value="Adenine_deam_C"/>
    <property type="match status" value="1"/>
</dbReference>
<dbReference type="Pfam" id="PF01979">
    <property type="entry name" value="Amidohydro_1"/>
    <property type="match status" value="1"/>
</dbReference>
<dbReference type="SUPFAM" id="SSF51338">
    <property type="entry name" value="Composite domain of metallo-dependent hydrolases"/>
    <property type="match status" value="1"/>
</dbReference>
<dbReference type="SUPFAM" id="SSF51556">
    <property type="entry name" value="Metallo-dependent hydrolases"/>
    <property type="match status" value="1"/>
</dbReference>
<name>ADEC2_BRASO</name>
<organism>
    <name type="scientific">Bradyrhizobium sp. (strain ORS 278)</name>
    <dbReference type="NCBI Taxonomy" id="114615"/>
    <lineage>
        <taxon>Bacteria</taxon>
        <taxon>Pseudomonadati</taxon>
        <taxon>Pseudomonadota</taxon>
        <taxon>Alphaproteobacteria</taxon>
        <taxon>Hyphomicrobiales</taxon>
        <taxon>Nitrobacteraceae</taxon>
        <taxon>Bradyrhizobium</taxon>
    </lineage>
</organism>
<reference key="1">
    <citation type="journal article" date="2007" name="Science">
        <title>Legumes symbioses: absence of nod genes in photosynthetic bradyrhizobia.</title>
        <authorList>
            <person name="Giraud E."/>
            <person name="Moulin L."/>
            <person name="Vallenet D."/>
            <person name="Barbe V."/>
            <person name="Cytryn E."/>
            <person name="Avarre J.-C."/>
            <person name="Jaubert M."/>
            <person name="Simon D."/>
            <person name="Cartieaux F."/>
            <person name="Prin Y."/>
            <person name="Bena G."/>
            <person name="Hannibal L."/>
            <person name="Fardoux J."/>
            <person name="Kojadinovic M."/>
            <person name="Vuillet L."/>
            <person name="Lajus A."/>
            <person name="Cruveiller S."/>
            <person name="Rouy Z."/>
            <person name="Mangenot S."/>
            <person name="Segurens B."/>
            <person name="Dossat C."/>
            <person name="Franck W.L."/>
            <person name="Chang W.-S."/>
            <person name="Saunders E."/>
            <person name="Bruce D."/>
            <person name="Richardson P."/>
            <person name="Normand P."/>
            <person name="Dreyfus B."/>
            <person name="Pignol D."/>
            <person name="Stacey G."/>
            <person name="Emerich D."/>
            <person name="Vermeglio A."/>
            <person name="Medigue C."/>
            <person name="Sadowsky M."/>
        </authorList>
    </citation>
    <scope>NUCLEOTIDE SEQUENCE [LARGE SCALE GENOMIC DNA]</scope>
    <source>
        <strain>ORS 278</strain>
    </source>
</reference>